<dbReference type="EC" id="4.1.1.49" evidence="1"/>
<dbReference type="EMBL" id="CP000020">
    <property type="protein sequence ID" value="AAW86973.1"/>
    <property type="status" value="ALT_INIT"/>
    <property type="molecule type" value="Genomic_DNA"/>
</dbReference>
<dbReference type="RefSeq" id="WP_011262836.1">
    <property type="nucleotide sequence ID" value="NZ_CAWLES010000001.1"/>
</dbReference>
<dbReference type="RefSeq" id="YP_205861.1">
    <property type="nucleotide sequence ID" value="NC_006840.2"/>
</dbReference>
<dbReference type="SMR" id="Q5E1X3"/>
<dbReference type="STRING" id="312309.VF_2478"/>
<dbReference type="EnsemblBacteria" id="AAW86973">
    <property type="protein sequence ID" value="AAW86973"/>
    <property type="gene ID" value="VF_2478"/>
</dbReference>
<dbReference type="GeneID" id="54165208"/>
<dbReference type="KEGG" id="vfi:VF_2478"/>
<dbReference type="PATRIC" id="fig|312309.11.peg.2505"/>
<dbReference type="eggNOG" id="COG1866">
    <property type="taxonomic scope" value="Bacteria"/>
</dbReference>
<dbReference type="HOGENOM" id="CLU_018247_0_1_6"/>
<dbReference type="OrthoDB" id="9806325at2"/>
<dbReference type="UniPathway" id="UPA00138"/>
<dbReference type="Proteomes" id="UP000000537">
    <property type="component" value="Chromosome I"/>
</dbReference>
<dbReference type="GO" id="GO:0005829">
    <property type="term" value="C:cytosol"/>
    <property type="evidence" value="ECO:0007669"/>
    <property type="project" value="TreeGrafter"/>
</dbReference>
<dbReference type="GO" id="GO:0005524">
    <property type="term" value="F:ATP binding"/>
    <property type="evidence" value="ECO:0007669"/>
    <property type="project" value="UniProtKB-UniRule"/>
</dbReference>
<dbReference type="GO" id="GO:0046872">
    <property type="term" value="F:metal ion binding"/>
    <property type="evidence" value="ECO:0007669"/>
    <property type="project" value="UniProtKB-KW"/>
</dbReference>
<dbReference type="GO" id="GO:0004612">
    <property type="term" value="F:phosphoenolpyruvate carboxykinase (ATP) activity"/>
    <property type="evidence" value="ECO:0007669"/>
    <property type="project" value="UniProtKB-UniRule"/>
</dbReference>
<dbReference type="GO" id="GO:0006094">
    <property type="term" value="P:gluconeogenesis"/>
    <property type="evidence" value="ECO:0007669"/>
    <property type="project" value="UniProtKB-UniRule"/>
</dbReference>
<dbReference type="CDD" id="cd00484">
    <property type="entry name" value="PEPCK_ATP"/>
    <property type="match status" value="1"/>
</dbReference>
<dbReference type="FunFam" id="2.170.8.10:FF:000001">
    <property type="entry name" value="Phosphoenolpyruvate carboxykinase (ATP)"/>
    <property type="match status" value="1"/>
</dbReference>
<dbReference type="FunFam" id="3.40.449.10:FF:000001">
    <property type="entry name" value="Phosphoenolpyruvate carboxykinase (ATP)"/>
    <property type="match status" value="1"/>
</dbReference>
<dbReference type="Gene3D" id="3.90.228.20">
    <property type="match status" value="1"/>
</dbReference>
<dbReference type="Gene3D" id="3.40.449.10">
    <property type="entry name" value="Phosphoenolpyruvate Carboxykinase, domain 1"/>
    <property type="match status" value="1"/>
</dbReference>
<dbReference type="Gene3D" id="2.170.8.10">
    <property type="entry name" value="Phosphoenolpyruvate Carboxykinase, domain 2"/>
    <property type="match status" value="1"/>
</dbReference>
<dbReference type="HAMAP" id="MF_00453">
    <property type="entry name" value="PEPCK_ATP"/>
    <property type="match status" value="1"/>
</dbReference>
<dbReference type="InterPro" id="IPR001272">
    <property type="entry name" value="PEP_carboxykinase_ATP"/>
</dbReference>
<dbReference type="InterPro" id="IPR013035">
    <property type="entry name" value="PEP_carboxykinase_C"/>
</dbReference>
<dbReference type="InterPro" id="IPR008210">
    <property type="entry name" value="PEP_carboxykinase_N"/>
</dbReference>
<dbReference type="InterPro" id="IPR015994">
    <property type="entry name" value="PEPCK_ATP_CS"/>
</dbReference>
<dbReference type="NCBIfam" id="TIGR00224">
    <property type="entry name" value="pckA"/>
    <property type="match status" value="1"/>
</dbReference>
<dbReference type="NCBIfam" id="NF006819">
    <property type="entry name" value="PRK09344.1-1"/>
    <property type="match status" value="1"/>
</dbReference>
<dbReference type="NCBIfam" id="NF006820">
    <property type="entry name" value="PRK09344.1-2"/>
    <property type="match status" value="1"/>
</dbReference>
<dbReference type="NCBIfam" id="NF006821">
    <property type="entry name" value="PRK09344.1-3"/>
    <property type="match status" value="1"/>
</dbReference>
<dbReference type="PANTHER" id="PTHR30031:SF0">
    <property type="entry name" value="PHOSPHOENOLPYRUVATE CARBOXYKINASE (ATP)"/>
    <property type="match status" value="1"/>
</dbReference>
<dbReference type="PANTHER" id="PTHR30031">
    <property type="entry name" value="PHOSPHOENOLPYRUVATE CARBOXYKINASE ATP"/>
    <property type="match status" value="1"/>
</dbReference>
<dbReference type="Pfam" id="PF01293">
    <property type="entry name" value="PEPCK_ATP"/>
    <property type="match status" value="1"/>
</dbReference>
<dbReference type="PIRSF" id="PIRSF006294">
    <property type="entry name" value="PEP_crbxkin"/>
    <property type="match status" value="1"/>
</dbReference>
<dbReference type="SUPFAM" id="SSF68923">
    <property type="entry name" value="PEP carboxykinase N-terminal domain"/>
    <property type="match status" value="1"/>
</dbReference>
<dbReference type="SUPFAM" id="SSF53795">
    <property type="entry name" value="PEP carboxykinase-like"/>
    <property type="match status" value="1"/>
</dbReference>
<dbReference type="PROSITE" id="PS00532">
    <property type="entry name" value="PEPCK_ATP"/>
    <property type="match status" value="1"/>
</dbReference>
<protein>
    <recommendedName>
        <fullName evidence="1">Phosphoenolpyruvate carboxykinase (ATP)</fullName>
        <shortName evidence="1">PCK</shortName>
        <shortName evidence="1">PEP carboxykinase</shortName>
        <shortName evidence="1">PEPCK</shortName>
        <ecNumber evidence="1">4.1.1.49</ecNumber>
    </recommendedName>
</protein>
<comment type="function">
    <text evidence="1">Involved in the gluconeogenesis. Catalyzes the conversion of oxaloacetate (OAA) to phosphoenolpyruvate (PEP) through direct phosphoryl transfer between the nucleoside triphosphate and OAA.</text>
</comment>
<comment type="catalytic activity">
    <reaction evidence="1">
        <text>oxaloacetate + ATP = phosphoenolpyruvate + ADP + CO2</text>
        <dbReference type="Rhea" id="RHEA:18617"/>
        <dbReference type="ChEBI" id="CHEBI:16452"/>
        <dbReference type="ChEBI" id="CHEBI:16526"/>
        <dbReference type="ChEBI" id="CHEBI:30616"/>
        <dbReference type="ChEBI" id="CHEBI:58702"/>
        <dbReference type="ChEBI" id="CHEBI:456216"/>
        <dbReference type="EC" id="4.1.1.49"/>
    </reaction>
</comment>
<comment type="cofactor">
    <cofactor evidence="1">
        <name>Mn(2+)</name>
        <dbReference type="ChEBI" id="CHEBI:29035"/>
    </cofactor>
    <text evidence="1">Binds 1 Mn(2+) ion per subunit.</text>
</comment>
<comment type="pathway">
    <text evidence="1">Carbohydrate biosynthesis; gluconeogenesis.</text>
</comment>
<comment type="subunit">
    <text evidence="1">Monomer.</text>
</comment>
<comment type="subcellular location">
    <subcellularLocation>
        <location evidence="1">Cytoplasm</location>
    </subcellularLocation>
</comment>
<comment type="similarity">
    <text evidence="1">Belongs to the phosphoenolpyruvate carboxykinase (ATP) family.</text>
</comment>
<comment type="sequence caution" evidence="2">
    <conflict type="erroneous initiation">
        <sequence resource="EMBL-CDS" id="AAW86973"/>
    </conflict>
    <text>Extended N-terminus.</text>
</comment>
<gene>
    <name evidence="1" type="primary">pckA</name>
    <name type="ordered locus">VF_2478</name>
</gene>
<evidence type="ECO:0000255" key="1">
    <source>
        <dbReference type="HAMAP-Rule" id="MF_00453"/>
    </source>
</evidence>
<evidence type="ECO:0000305" key="2"/>
<feature type="chain" id="PRO_0000236954" description="Phosphoenolpyruvate carboxykinase (ATP)">
    <location>
        <begin position="1"/>
        <end position="537"/>
    </location>
</feature>
<feature type="binding site" evidence="1">
    <location>
        <position position="64"/>
    </location>
    <ligand>
        <name>substrate</name>
    </ligand>
</feature>
<feature type="binding site" evidence="1">
    <location>
        <position position="204"/>
    </location>
    <ligand>
        <name>substrate</name>
    </ligand>
</feature>
<feature type="binding site" evidence="1">
    <location>
        <position position="210"/>
    </location>
    <ligand>
        <name>ATP</name>
        <dbReference type="ChEBI" id="CHEBI:30616"/>
    </ligand>
</feature>
<feature type="binding site" evidence="1">
    <location>
        <position position="210"/>
    </location>
    <ligand>
        <name>Mn(2+)</name>
        <dbReference type="ChEBI" id="CHEBI:29035"/>
    </ligand>
</feature>
<feature type="binding site" evidence="1">
    <location>
        <position position="210"/>
    </location>
    <ligand>
        <name>substrate</name>
    </ligand>
</feature>
<feature type="binding site" evidence="1">
    <location>
        <position position="229"/>
    </location>
    <ligand>
        <name>ATP</name>
        <dbReference type="ChEBI" id="CHEBI:30616"/>
    </ligand>
</feature>
<feature type="binding site" evidence="1">
    <location>
        <position position="229"/>
    </location>
    <ligand>
        <name>Mn(2+)</name>
        <dbReference type="ChEBI" id="CHEBI:29035"/>
    </ligand>
</feature>
<feature type="binding site" evidence="1">
    <location>
        <begin position="245"/>
        <end position="253"/>
    </location>
    <ligand>
        <name>ATP</name>
        <dbReference type="ChEBI" id="CHEBI:30616"/>
    </ligand>
</feature>
<feature type="binding site" evidence="1">
    <location>
        <position position="266"/>
    </location>
    <ligand>
        <name>Mn(2+)</name>
        <dbReference type="ChEBI" id="CHEBI:29035"/>
    </ligand>
</feature>
<feature type="binding site" evidence="1">
    <location>
        <position position="294"/>
    </location>
    <ligand>
        <name>ATP</name>
        <dbReference type="ChEBI" id="CHEBI:30616"/>
    </ligand>
</feature>
<feature type="binding site" evidence="1">
    <location>
        <position position="330"/>
    </location>
    <ligand>
        <name>ATP</name>
        <dbReference type="ChEBI" id="CHEBI:30616"/>
    </ligand>
</feature>
<feature type="binding site" evidence="1">
    <location>
        <position position="330"/>
    </location>
    <ligand>
        <name>substrate</name>
    </ligand>
</feature>
<feature type="binding site" evidence="1">
    <location>
        <begin position="446"/>
        <end position="447"/>
    </location>
    <ligand>
        <name>ATP</name>
        <dbReference type="ChEBI" id="CHEBI:30616"/>
    </ligand>
</feature>
<feature type="binding site" evidence="1">
    <location>
        <position position="452"/>
    </location>
    <ligand>
        <name>ATP</name>
        <dbReference type="ChEBI" id="CHEBI:30616"/>
    </ligand>
</feature>
<sequence>MEHKKAALLDLTQYGLTGVTDVLRNPSYEQLFEEETRPDLEGYERGVMTELGSVAVDTGIFTGRSPKDKYIVKDDTTKDTLWWSDQGKNDNKAITPAVWDDLKSLVTTQLSGKRLFVIDGFCGANPDTRLNVRIITEVAWQAHFVKNMFIRPTEAELENFEPDFVVMNGAKVTNPNYEKHGLNSENFVAFNLTERVQIIGGTWYGGEMKKGMFAMMNYLLPLKGIASMHCSANVGEKGDVAVFFGLSGTGKTTLSTDPKRQLIGDDEHGWDDDGIFNFEGGCYAKTIRLSKEAEPDIYNAIRRDALLENVTVRSDSSIDFNDGSKTENTRVSYPIYHIDNIVKPVSKAGHAKKVIFLTADAFGVLPPVAKLTPEQTKYHFLSGFTAKLAGTERGITEPTPTFSAAFGAAFLTLHPTQYAEVLVKRMEAAGAEAYIVNTGWNGTGKRISIQDTRGIIDAILDGSIDQAKTKNIPVFNLEVPTSLPGVDASILDPRDTYTDPLQWDSKAEDLAQRFIKNFAQYTDNEEGKALVKAGPQL</sequence>
<proteinExistence type="inferred from homology"/>
<name>PCKA_ALIF1</name>
<keyword id="KW-0067">ATP-binding</keyword>
<keyword id="KW-0963">Cytoplasm</keyword>
<keyword id="KW-0210">Decarboxylase</keyword>
<keyword id="KW-0312">Gluconeogenesis</keyword>
<keyword id="KW-0456">Lyase</keyword>
<keyword id="KW-0464">Manganese</keyword>
<keyword id="KW-0479">Metal-binding</keyword>
<keyword id="KW-0547">Nucleotide-binding</keyword>
<keyword id="KW-1185">Reference proteome</keyword>
<organism>
    <name type="scientific">Aliivibrio fischeri (strain ATCC 700601 / ES114)</name>
    <name type="common">Vibrio fischeri</name>
    <dbReference type="NCBI Taxonomy" id="312309"/>
    <lineage>
        <taxon>Bacteria</taxon>
        <taxon>Pseudomonadati</taxon>
        <taxon>Pseudomonadota</taxon>
        <taxon>Gammaproteobacteria</taxon>
        <taxon>Vibrionales</taxon>
        <taxon>Vibrionaceae</taxon>
        <taxon>Aliivibrio</taxon>
    </lineage>
</organism>
<accession>Q5E1X3</accession>
<reference key="1">
    <citation type="journal article" date="2005" name="Proc. Natl. Acad. Sci. U.S.A.">
        <title>Complete genome sequence of Vibrio fischeri: a symbiotic bacterium with pathogenic congeners.</title>
        <authorList>
            <person name="Ruby E.G."/>
            <person name="Urbanowski M."/>
            <person name="Campbell J."/>
            <person name="Dunn A."/>
            <person name="Faini M."/>
            <person name="Gunsalus R."/>
            <person name="Lostroh P."/>
            <person name="Lupp C."/>
            <person name="McCann J."/>
            <person name="Millikan D."/>
            <person name="Schaefer A."/>
            <person name="Stabb E."/>
            <person name="Stevens A."/>
            <person name="Visick K."/>
            <person name="Whistler C."/>
            <person name="Greenberg E.P."/>
        </authorList>
    </citation>
    <scope>NUCLEOTIDE SEQUENCE [LARGE SCALE GENOMIC DNA]</scope>
    <source>
        <strain>ATCC 700601 / ES114</strain>
    </source>
</reference>